<feature type="chain" id="PRO_0000353785" description="Cytochrome c biogenesis protein CcsA">
    <location>
        <begin position="1"/>
        <end position="321"/>
    </location>
</feature>
<feature type="transmembrane region" description="Helical" evidence="1">
    <location>
        <begin position="17"/>
        <end position="37"/>
    </location>
</feature>
<feature type="transmembrane region" description="Helical" evidence="1">
    <location>
        <begin position="41"/>
        <end position="61"/>
    </location>
</feature>
<feature type="transmembrane region" description="Helical" evidence="1">
    <location>
        <begin position="68"/>
        <end position="88"/>
    </location>
</feature>
<feature type="transmembrane region" description="Helical" evidence="1">
    <location>
        <begin position="143"/>
        <end position="163"/>
    </location>
</feature>
<feature type="transmembrane region" description="Helical" evidence="1">
    <location>
        <begin position="227"/>
        <end position="247"/>
    </location>
</feature>
<feature type="transmembrane region" description="Helical" evidence="1">
    <location>
        <begin position="260"/>
        <end position="277"/>
    </location>
</feature>
<feature type="transmembrane region" description="Helical" evidence="1">
    <location>
        <begin position="288"/>
        <end position="308"/>
    </location>
</feature>
<gene>
    <name evidence="1" type="primary">ccsA</name>
</gene>
<comment type="function">
    <text evidence="1">Required during biogenesis of c-type cytochromes (cytochrome c6 and cytochrome f) at the step of heme attachment.</text>
</comment>
<comment type="subunit">
    <text evidence="1">May interact with Ccs1.</text>
</comment>
<comment type="subcellular location">
    <subcellularLocation>
        <location evidence="1">Plastid</location>
        <location evidence="1">Chloroplast thylakoid membrane</location>
        <topology evidence="1">Multi-pass membrane protein</topology>
    </subcellularLocation>
</comment>
<comment type="similarity">
    <text evidence="1">Belongs to the CcmF/CycK/Ccl1/NrfE/CcsA family.</text>
</comment>
<geneLocation type="chloroplast"/>
<sequence>MISIALEHVLTHISFSIISIVISVHLIKFLVPEIIGLCDSLEKGIITTSFCITGLLIIRWVYSRHLPLSNLYESLMFLSWGFSTIHIFSKIWNHQNDLSTITATGAIYCQAFATSGILNEMHQSAILVPALQSQWLMMHVSMMLLSYGALLCGSLLSVSLLVITFRKNIEILEKMNQFSFLIESFLLSEVRPLKKKKSFLQNISFLSFKNYHKYQFTQQLDHWSYRIINLGFTLLTIGILSGAVWANEAWGSYWNWDPKETWAFITWTIFATYLHTRTNQRMPGMHSAIVASIGFLIIWICYFGVNLLGIGLHSYGAFTSN</sequence>
<proteinExistence type="inferred from homology"/>
<accession>Q06GK4</accession>
<protein>
    <recommendedName>
        <fullName evidence="1">Cytochrome c biogenesis protein CcsA</fullName>
    </recommendedName>
</protein>
<name>CCSA_PIPCE</name>
<keyword id="KW-0150">Chloroplast</keyword>
<keyword id="KW-0201">Cytochrome c-type biogenesis</keyword>
<keyword id="KW-0472">Membrane</keyword>
<keyword id="KW-0934">Plastid</keyword>
<keyword id="KW-0793">Thylakoid</keyword>
<keyword id="KW-0812">Transmembrane</keyword>
<keyword id="KW-1133">Transmembrane helix</keyword>
<evidence type="ECO:0000255" key="1">
    <source>
        <dbReference type="HAMAP-Rule" id="MF_01391"/>
    </source>
</evidence>
<dbReference type="EMBL" id="DQ887677">
    <property type="protein sequence ID" value="ABI14527.1"/>
    <property type="molecule type" value="Genomic_DNA"/>
</dbReference>
<dbReference type="RefSeq" id="YP_784529.1">
    <property type="nucleotide sequence ID" value="NC_008457.1"/>
</dbReference>
<dbReference type="SMR" id="Q06GK4"/>
<dbReference type="GeneID" id="4363706"/>
<dbReference type="GO" id="GO:0009535">
    <property type="term" value="C:chloroplast thylakoid membrane"/>
    <property type="evidence" value="ECO:0007669"/>
    <property type="project" value="UniProtKB-SubCell"/>
</dbReference>
<dbReference type="GO" id="GO:0005886">
    <property type="term" value="C:plasma membrane"/>
    <property type="evidence" value="ECO:0007669"/>
    <property type="project" value="TreeGrafter"/>
</dbReference>
<dbReference type="GO" id="GO:0020037">
    <property type="term" value="F:heme binding"/>
    <property type="evidence" value="ECO:0007669"/>
    <property type="project" value="InterPro"/>
</dbReference>
<dbReference type="GO" id="GO:0017004">
    <property type="term" value="P:cytochrome complex assembly"/>
    <property type="evidence" value="ECO:0007669"/>
    <property type="project" value="UniProtKB-UniRule"/>
</dbReference>
<dbReference type="HAMAP" id="MF_01391">
    <property type="entry name" value="CytC_CcsA"/>
    <property type="match status" value="1"/>
</dbReference>
<dbReference type="InterPro" id="IPR002541">
    <property type="entry name" value="Cyt_c_assembly"/>
</dbReference>
<dbReference type="InterPro" id="IPR017562">
    <property type="entry name" value="Cyt_c_biogenesis_CcsA"/>
</dbReference>
<dbReference type="InterPro" id="IPR045062">
    <property type="entry name" value="Cyt_c_biogenesis_CcsA/CcmC"/>
</dbReference>
<dbReference type="NCBIfam" id="TIGR03144">
    <property type="entry name" value="cytochr_II_ccsB"/>
    <property type="match status" value="1"/>
</dbReference>
<dbReference type="PANTHER" id="PTHR30071:SF1">
    <property type="entry name" value="CYTOCHROME B_B6 PROTEIN-RELATED"/>
    <property type="match status" value="1"/>
</dbReference>
<dbReference type="PANTHER" id="PTHR30071">
    <property type="entry name" value="HEME EXPORTER PROTEIN C"/>
    <property type="match status" value="1"/>
</dbReference>
<dbReference type="Pfam" id="PF01578">
    <property type="entry name" value="Cytochrom_C_asm"/>
    <property type="match status" value="1"/>
</dbReference>
<reference key="1">
    <citation type="journal article" date="2006" name="BMC Evol. Biol.">
        <title>Complete plastid genome sequences of Drimys, Liriodendron, and Piper: implications for the phylogenetic relationships of magnoliids.</title>
        <authorList>
            <person name="Cai Z."/>
            <person name="Penaflor C."/>
            <person name="Kuehl J.V."/>
            <person name="Leebens-Mack J."/>
            <person name="Carlson J.E."/>
            <person name="dePamphilis C.W."/>
            <person name="Boore J.L."/>
            <person name="Jansen R.K."/>
        </authorList>
    </citation>
    <scope>NUCLEOTIDE SEQUENCE [LARGE SCALE GENOMIC DNA]</scope>
</reference>
<organism>
    <name type="scientific">Piper cenocladum</name>
    <name type="common">Ant piper</name>
    <dbReference type="NCBI Taxonomy" id="398741"/>
    <lineage>
        <taxon>Eukaryota</taxon>
        <taxon>Viridiplantae</taxon>
        <taxon>Streptophyta</taxon>
        <taxon>Embryophyta</taxon>
        <taxon>Tracheophyta</taxon>
        <taxon>Spermatophyta</taxon>
        <taxon>Magnoliopsida</taxon>
        <taxon>Magnoliidae</taxon>
        <taxon>Piperales</taxon>
        <taxon>Piperaceae</taxon>
        <taxon>Piper</taxon>
    </lineage>
</organism>